<keyword id="KW-0027">Amidation</keyword>
<keyword id="KW-0903">Direct protein sequencing</keyword>
<keyword id="KW-0527">Neuropeptide</keyword>
<keyword id="KW-0964">Secreted</keyword>
<protein>
    <recommendedName>
        <fullName>Cydiastatin-7</fullName>
    </recommendedName>
</protein>
<organism>
    <name type="scientific">Cydia pomonella</name>
    <name type="common">Codling moth</name>
    <dbReference type="NCBI Taxonomy" id="82600"/>
    <lineage>
        <taxon>Eukaryota</taxon>
        <taxon>Metazoa</taxon>
        <taxon>Ecdysozoa</taxon>
        <taxon>Arthropoda</taxon>
        <taxon>Hexapoda</taxon>
        <taxon>Insecta</taxon>
        <taxon>Pterygota</taxon>
        <taxon>Neoptera</taxon>
        <taxon>Endopterygota</taxon>
        <taxon>Lepidoptera</taxon>
        <taxon>Glossata</taxon>
        <taxon>Ditrysia</taxon>
        <taxon>Tortricoidea</taxon>
        <taxon>Tortricidae</taxon>
        <taxon>Olethreutinae</taxon>
        <taxon>Grapholitini</taxon>
        <taxon>Cydia</taxon>
    </lineage>
</organism>
<proteinExistence type="evidence at protein level"/>
<name>ALL7_CYDPO</name>
<comment type="subcellular location">
    <subcellularLocation>
        <location>Secreted</location>
    </subcellularLocation>
</comment>
<comment type="similarity">
    <text evidence="2">Belongs to the allatostatin family.</text>
</comment>
<evidence type="ECO:0000269" key="1">
    <source>
    </source>
</evidence>
<evidence type="ECO:0000305" key="2"/>
<reference key="1">
    <citation type="journal article" date="1997" name="Peptides">
        <title>Lepidopteran peptides of the allatostatin superfamily.</title>
        <authorList>
            <person name="Duve H."/>
            <person name="Johnsen A.H."/>
            <person name="Maestro J.-L."/>
            <person name="Scott A.G."/>
            <person name="Winstanley D."/>
            <person name="Davey M."/>
            <person name="East P.D."/>
            <person name="Thorpe A."/>
        </authorList>
    </citation>
    <scope>PROTEIN SEQUENCE</scope>
    <scope>AMIDATION AT LEU-7</scope>
    <source>
        <tissue>Larva</tissue>
    </source>
</reference>
<dbReference type="GO" id="GO:0005576">
    <property type="term" value="C:extracellular region"/>
    <property type="evidence" value="ECO:0007669"/>
    <property type="project" value="UniProtKB-SubCell"/>
</dbReference>
<dbReference type="GO" id="GO:0007218">
    <property type="term" value="P:neuropeptide signaling pathway"/>
    <property type="evidence" value="ECO:0007669"/>
    <property type="project" value="UniProtKB-KW"/>
</dbReference>
<sequence>KMYDFGL</sequence>
<accession>P82158</accession>
<feature type="peptide" id="PRO_0000043482" description="Cydiastatin-7">
    <location>
        <begin position="1"/>
        <end position="7"/>
    </location>
</feature>
<feature type="modified residue" description="Leucine amide" evidence="1">
    <location>
        <position position="7"/>
    </location>
</feature>